<evidence type="ECO:0000269" key="1">
    <source>
    </source>
</evidence>
<evidence type="ECO:0000305" key="2"/>
<evidence type="ECO:0007744" key="3">
    <source>
    </source>
</evidence>
<evidence type="ECO:0007829" key="4">
    <source>
        <dbReference type="PDB" id="3QV0"/>
    </source>
</evidence>
<feature type="transit peptide" description="Mitochondrion">
    <location>
        <begin position="1"/>
        <end position="47"/>
    </location>
</feature>
<feature type="chain" id="PRO_0000018589" description="Mitochondrial acidic protein MAM33">
    <location>
        <begin position="48"/>
        <end position="266"/>
    </location>
</feature>
<feature type="modified residue" description="Phosphothreonine" evidence="3">
    <location>
        <position position="91"/>
    </location>
</feature>
<feature type="sequence conflict" description="In Ref. 4; AAS56186." evidence="2" ref="4">
    <original>E</original>
    <variation>G</variation>
    <location>
        <position position="129"/>
    </location>
</feature>
<feature type="helix" evidence="4">
    <location>
        <begin position="50"/>
        <end position="65"/>
    </location>
</feature>
<feature type="helix" evidence="4">
    <location>
        <begin position="74"/>
        <end position="83"/>
    </location>
</feature>
<feature type="strand" evidence="4">
    <location>
        <begin position="87"/>
        <end position="89"/>
    </location>
</feature>
<feature type="strand" evidence="4">
    <location>
        <begin position="95"/>
        <end position="102"/>
    </location>
</feature>
<feature type="strand" evidence="4">
    <location>
        <begin position="108"/>
        <end position="114"/>
    </location>
</feature>
<feature type="helix" evidence="4">
    <location>
        <begin position="115"/>
        <end position="118"/>
    </location>
</feature>
<feature type="strand" evidence="4">
    <location>
        <begin position="151"/>
        <end position="158"/>
    </location>
</feature>
<feature type="strand" evidence="4">
    <location>
        <begin position="166"/>
        <end position="174"/>
    </location>
</feature>
<feature type="turn" evidence="4">
    <location>
        <begin position="175"/>
        <end position="178"/>
    </location>
</feature>
<feature type="strand" evidence="4">
    <location>
        <begin position="179"/>
        <end position="190"/>
    </location>
</feature>
<feature type="helix" evidence="4">
    <location>
        <begin position="191"/>
        <end position="195"/>
    </location>
</feature>
<feature type="helix" evidence="4">
    <location>
        <begin position="199"/>
        <end position="207"/>
    </location>
</feature>
<feature type="helix" evidence="4">
    <location>
        <begin position="214"/>
        <end position="216"/>
    </location>
</feature>
<feature type="helix" evidence="4">
    <location>
        <begin position="219"/>
        <end position="231"/>
    </location>
</feature>
<feature type="helix" evidence="4">
    <location>
        <begin position="236"/>
        <end position="265"/>
    </location>
</feature>
<keyword id="KW-0002">3D-structure</keyword>
<keyword id="KW-0903">Direct protein sequencing</keyword>
<keyword id="KW-0496">Mitochondrion</keyword>
<keyword id="KW-0597">Phosphoprotein</keyword>
<keyword id="KW-1185">Reference proteome</keyword>
<keyword id="KW-0809">Transit peptide</keyword>
<sequence length="266" mass="30132">MFLRSVNRAVTRSILTTPKPAVVKSSWRVFTVANSKRCFTPAAIMRNQETQRVGDILQSELKIEKETLPESTSLDSFNDFLNKYKFSLVETPGKNEAEIVRRTESGETVHVFFDVAQIANLPYNNAMDENTEQNEDGINEDDFDALSDNFANVNVVISKESASEPAVSFELLMNLQEGSFYVDSATPYPSVDAALNQSAEAEITRELVYHGPPFSNLDEELQESLEAYLESRGVNEELASFISAYSEFKENNEYISWLEKMKKFFH</sequence>
<reference key="1">
    <citation type="journal article" date="1998" name="Yeast">
        <title>Mam33p, an oligomeric, acidic protein in the mitochondrial matrix of Saccharomyces cerevisiae is related to the human complement receptor gC1q-R.</title>
        <authorList>
            <person name="Seytter T."/>
            <person name="Lottspeich F."/>
            <person name="Neupert W."/>
            <person name="Schwarz E."/>
        </authorList>
    </citation>
    <scope>NUCLEOTIDE SEQUENCE [GENOMIC DNA]</scope>
    <scope>PARTIAL PROTEIN SEQUENCE</scope>
    <scope>CHARACTERIZATION</scope>
</reference>
<reference key="2">
    <citation type="journal article" date="1997" name="Nature">
        <title>The nucleotide sequence of Saccharomyces cerevisiae chromosome IX.</title>
        <authorList>
            <person name="Churcher C.M."/>
            <person name="Bowman S."/>
            <person name="Badcock K."/>
            <person name="Bankier A.T."/>
            <person name="Brown D."/>
            <person name="Chillingworth T."/>
            <person name="Connor R."/>
            <person name="Devlin K."/>
            <person name="Gentles S."/>
            <person name="Hamlin N."/>
            <person name="Harris D.E."/>
            <person name="Horsnell T."/>
            <person name="Hunt S."/>
            <person name="Jagels K."/>
            <person name="Jones M."/>
            <person name="Lye G."/>
            <person name="Moule S."/>
            <person name="Odell C."/>
            <person name="Pearson D."/>
            <person name="Rajandream M.A."/>
            <person name="Rice P."/>
            <person name="Rowley N."/>
            <person name="Skelton J."/>
            <person name="Smith V."/>
            <person name="Walsh S.V."/>
            <person name="Whitehead S."/>
            <person name="Barrell B.G."/>
        </authorList>
    </citation>
    <scope>NUCLEOTIDE SEQUENCE [LARGE SCALE GENOMIC DNA]</scope>
    <source>
        <strain>ATCC 204508 / S288c</strain>
    </source>
</reference>
<reference key="3">
    <citation type="journal article" date="2014" name="G3 (Bethesda)">
        <title>The reference genome sequence of Saccharomyces cerevisiae: Then and now.</title>
        <authorList>
            <person name="Engel S.R."/>
            <person name="Dietrich F.S."/>
            <person name="Fisk D.G."/>
            <person name="Binkley G."/>
            <person name="Balakrishnan R."/>
            <person name="Costanzo M.C."/>
            <person name="Dwight S.S."/>
            <person name="Hitz B.C."/>
            <person name="Karra K."/>
            <person name="Nash R.S."/>
            <person name="Weng S."/>
            <person name="Wong E.D."/>
            <person name="Lloyd P."/>
            <person name="Skrzypek M.S."/>
            <person name="Miyasato S.R."/>
            <person name="Simison M."/>
            <person name="Cherry J.M."/>
        </authorList>
    </citation>
    <scope>GENOME REANNOTATION</scope>
    <source>
        <strain>ATCC 204508 / S288c</strain>
    </source>
</reference>
<reference key="4">
    <citation type="journal article" date="2007" name="Genome Res.">
        <title>Approaching a complete repository of sequence-verified protein-encoding clones for Saccharomyces cerevisiae.</title>
        <authorList>
            <person name="Hu Y."/>
            <person name="Rolfs A."/>
            <person name="Bhullar B."/>
            <person name="Murthy T.V.S."/>
            <person name="Zhu C."/>
            <person name="Berger M.F."/>
            <person name="Camargo A.A."/>
            <person name="Kelley F."/>
            <person name="McCarron S."/>
            <person name="Jepson D."/>
            <person name="Richardson A."/>
            <person name="Raphael J."/>
            <person name="Moreira D."/>
            <person name="Taycher E."/>
            <person name="Zuo D."/>
            <person name="Mohr S."/>
            <person name="Kane M.F."/>
            <person name="Williamson J."/>
            <person name="Simpson A.J.G."/>
            <person name="Bulyk M.L."/>
            <person name="Harlow E."/>
            <person name="Marsischky G."/>
            <person name="Kolodner R.D."/>
            <person name="LaBaer J."/>
        </authorList>
    </citation>
    <scope>NUCLEOTIDE SEQUENCE [GENOMIC DNA]</scope>
    <source>
        <strain>ATCC 204508 / S288c</strain>
    </source>
</reference>
<reference key="5">
    <citation type="journal article" date="2003" name="Nature">
        <title>Global analysis of protein expression in yeast.</title>
        <authorList>
            <person name="Ghaemmaghami S."/>
            <person name="Huh W.-K."/>
            <person name="Bower K."/>
            <person name="Howson R.W."/>
            <person name="Belle A."/>
            <person name="Dephoure N."/>
            <person name="O'Shea E.K."/>
            <person name="Weissman J.S."/>
        </authorList>
    </citation>
    <scope>LEVEL OF PROTEIN EXPRESSION [LARGE SCALE ANALYSIS]</scope>
</reference>
<reference key="6">
    <citation type="journal article" date="2008" name="Mol. Cell. Proteomics">
        <title>A multidimensional chromatography technology for in-depth phosphoproteome analysis.</title>
        <authorList>
            <person name="Albuquerque C.P."/>
            <person name="Smolka M.B."/>
            <person name="Payne S.H."/>
            <person name="Bafna V."/>
            <person name="Eng J."/>
            <person name="Zhou H."/>
        </authorList>
    </citation>
    <scope>PHOSPHORYLATION [LARGE SCALE ANALYSIS] AT THR-91</scope>
    <scope>IDENTIFICATION BY MASS SPECTROMETRY [LARGE SCALE ANALYSIS]</scope>
</reference>
<comment type="function">
    <text>Not known. Binds to the sorting sequence of cytochrome b2.</text>
</comment>
<comment type="subunit">
    <text>Homotrimer or homotetramer.</text>
</comment>
<comment type="subcellular location">
    <subcellularLocation>
        <location>Mitochondrion matrix</location>
    </subcellularLocation>
</comment>
<comment type="miscellaneous">
    <text evidence="1">Present with 4910 molecules/cell in log phase SD medium.</text>
</comment>
<comment type="similarity">
    <text evidence="2">Belongs to the MAM33 family.</text>
</comment>
<proteinExistence type="evidence at protein level"/>
<dbReference type="EMBL" id="Z38060">
    <property type="protein sequence ID" value="CAA86153.1"/>
    <property type="molecule type" value="Genomic_DNA"/>
</dbReference>
<dbReference type="EMBL" id="AY557860">
    <property type="protein sequence ID" value="AAS56186.1"/>
    <property type="molecule type" value="Genomic_DNA"/>
</dbReference>
<dbReference type="EMBL" id="BK006942">
    <property type="protein sequence ID" value="DAA08480.1"/>
    <property type="molecule type" value="Genomic_DNA"/>
</dbReference>
<dbReference type="PIR" id="S48409">
    <property type="entry name" value="S48409"/>
</dbReference>
<dbReference type="RefSeq" id="NP_012194.1">
    <property type="nucleotide sequence ID" value="NM_001179420.1"/>
</dbReference>
<dbReference type="PDB" id="3QV0">
    <property type="method" value="X-ray"/>
    <property type="resolution" value="2.10 A"/>
    <property type="chains" value="A=48-266"/>
</dbReference>
<dbReference type="PDBsum" id="3QV0"/>
<dbReference type="SMR" id="P40513"/>
<dbReference type="BioGRID" id="34922">
    <property type="interactions" value="270"/>
</dbReference>
<dbReference type="DIP" id="DIP-4925N"/>
<dbReference type="FunCoup" id="P40513">
    <property type="interactions" value="715"/>
</dbReference>
<dbReference type="IntAct" id="P40513">
    <property type="interactions" value="72"/>
</dbReference>
<dbReference type="MINT" id="P40513"/>
<dbReference type="STRING" id="4932.YIL070C"/>
<dbReference type="GlyGen" id="P40513">
    <property type="glycosylation" value="1 site"/>
</dbReference>
<dbReference type="iPTMnet" id="P40513"/>
<dbReference type="PaxDb" id="4932-YIL070C"/>
<dbReference type="PeptideAtlas" id="P40513"/>
<dbReference type="EnsemblFungi" id="YIL070C_mRNA">
    <property type="protein sequence ID" value="YIL070C"/>
    <property type="gene ID" value="YIL070C"/>
</dbReference>
<dbReference type="GeneID" id="854740"/>
<dbReference type="KEGG" id="sce:YIL070C"/>
<dbReference type="AGR" id="SGD:S000001332"/>
<dbReference type="SGD" id="S000001332">
    <property type="gene designation" value="MAM33"/>
</dbReference>
<dbReference type="VEuPathDB" id="FungiDB:YIL070C"/>
<dbReference type="eggNOG" id="KOG2536">
    <property type="taxonomic scope" value="Eukaryota"/>
</dbReference>
<dbReference type="GeneTree" id="ENSGT00390000018406"/>
<dbReference type="HOGENOM" id="CLU_072692_0_1_1"/>
<dbReference type="InParanoid" id="P40513"/>
<dbReference type="OMA" id="CEYMMSK"/>
<dbReference type="OrthoDB" id="278212at2759"/>
<dbReference type="BioCyc" id="YEAST:G3O-31337-MONOMER"/>
<dbReference type="Reactome" id="R-SCE-8980692">
    <property type="pathway name" value="RHOA GTPase cycle"/>
</dbReference>
<dbReference type="Reactome" id="R-SCE-9013106">
    <property type="pathway name" value="RHOC GTPase cycle"/>
</dbReference>
<dbReference type="BioGRID-ORCS" id="854740">
    <property type="hits" value="0 hits in 10 CRISPR screens"/>
</dbReference>
<dbReference type="EvolutionaryTrace" id="P40513"/>
<dbReference type="PRO" id="PR:P40513"/>
<dbReference type="Proteomes" id="UP000002311">
    <property type="component" value="Chromosome IX"/>
</dbReference>
<dbReference type="RNAct" id="P40513">
    <property type="molecule type" value="protein"/>
</dbReference>
<dbReference type="GO" id="GO:0005759">
    <property type="term" value="C:mitochondrial matrix"/>
    <property type="evidence" value="ECO:0000314"/>
    <property type="project" value="SGD"/>
</dbReference>
<dbReference type="GO" id="GO:0005739">
    <property type="term" value="C:mitochondrion"/>
    <property type="evidence" value="ECO:0007005"/>
    <property type="project" value="SGD"/>
</dbReference>
<dbReference type="GO" id="GO:0097177">
    <property type="term" value="F:mitochondrial ribosome binding"/>
    <property type="evidence" value="ECO:0000314"/>
    <property type="project" value="SGD"/>
</dbReference>
<dbReference type="GO" id="GO:0009060">
    <property type="term" value="P:aerobic respiration"/>
    <property type="evidence" value="ECO:0000315"/>
    <property type="project" value="SGD"/>
</dbReference>
<dbReference type="GO" id="GO:0042256">
    <property type="term" value="P:cytosolic ribosome assembly"/>
    <property type="evidence" value="ECO:0000318"/>
    <property type="project" value="GO_Central"/>
</dbReference>
<dbReference type="GO" id="GO:0061668">
    <property type="term" value="P:mitochondrial ribosome assembly"/>
    <property type="evidence" value="ECO:0000315"/>
    <property type="project" value="SGD"/>
</dbReference>
<dbReference type="FunFam" id="3.10.280.10:FF:000008">
    <property type="entry name" value="Mam33p"/>
    <property type="match status" value="1"/>
</dbReference>
<dbReference type="Gene3D" id="3.10.280.10">
    <property type="entry name" value="Mitochondrial glycoprotein"/>
    <property type="match status" value="1"/>
</dbReference>
<dbReference type="InterPro" id="IPR003428">
    <property type="entry name" value="MAM33"/>
</dbReference>
<dbReference type="InterPro" id="IPR036561">
    <property type="entry name" value="MAM33_sf"/>
</dbReference>
<dbReference type="PANTHER" id="PTHR10826">
    <property type="entry name" value="COMPLEMENT COMPONENT 1"/>
    <property type="match status" value="1"/>
</dbReference>
<dbReference type="PANTHER" id="PTHR10826:SF1">
    <property type="entry name" value="COMPLEMENT COMPONENT 1 Q SUBCOMPONENT-BINDING PROTEIN, MITOCHONDRIAL"/>
    <property type="match status" value="1"/>
</dbReference>
<dbReference type="Pfam" id="PF02330">
    <property type="entry name" value="MAM33"/>
    <property type="match status" value="1"/>
</dbReference>
<dbReference type="SUPFAM" id="SSF54529">
    <property type="entry name" value="Mitochondrial glycoprotein MAM33-like"/>
    <property type="match status" value="1"/>
</dbReference>
<gene>
    <name type="primary">MAM33</name>
    <name type="ordered locus">YIL070C</name>
</gene>
<name>MAM33_YEAST</name>
<accession>P40513</accession>
<accession>D6VVL4</accession>
<accession>Q6Q5P4</accession>
<protein>
    <recommendedName>
        <fullName>Mitochondrial acidic protein MAM33</fullName>
    </recommendedName>
</protein>
<organism>
    <name type="scientific">Saccharomyces cerevisiae (strain ATCC 204508 / S288c)</name>
    <name type="common">Baker's yeast</name>
    <dbReference type="NCBI Taxonomy" id="559292"/>
    <lineage>
        <taxon>Eukaryota</taxon>
        <taxon>Fungi</taxon>
        <taxon>Dikarya</taxon>
        <taxon>Ascomycota</taxon>
        <taxon>Saccharomycotina</taxon>
        <taxon>Saccharomycetes</taxon>
        <taxon>Saccharomycetales</taxon>
        <taxon>Saccharomycetaceae</taxon>
        <taxon>Saccharomyces</taxon>
    </lineage>
</organism>